<accession>Q8D3T7</accession>
<evidence type="ECO:0000255" key="1">
    <source>
        <dbReference type="HAMAP-Rule" id="MF_00193"/>
    </source>
</evidence>
<protein>
    <recommendedName>
        <fullName evidence="1">NH(3)-dependent NAD(+) synthetase</fullName>
        <ecNumber evidence="1">6.3.1.5</ecNumber>
    </recommendedName>
</protein>
<comment type="function">
    <text evidence="1">Catalyzes the ATP-dependent amidation of deamido-NAD to form NAD. Uses ammonia as a nitrogen source.</text>
</comment>
<comment type="catalytic activity">
    <reaction evidence="1">
        <text>deamido-NAD(+) + NH4(+) + ATP = AMP + diphosphate + NAD(+) + H(+)</text>
        <dbReference type="Rhea" id="RHEA:21188"/>
        <dbReference type="ChEBI" id="CHEBI:15378"/>
        <dbReference type="ChEBI" id="CHEBI:28938"/>
        <dbReference type="ChEBI" id="CHEBI:30616"/>
        <dbReference type="ChEBI" id="CHEBI:33019"/>
        <dbReference type="ChEBI" id="CHEBI:57540"/>
        <dbReference type="ChEBI" id="CHEBI:58437"/>
        <dbReference type="ChEBI" id="CHEBI:456215"/>
        <dbReference type="EC" id="6.3.1.5"/>
    </reaction>
</comment>
<comment type="pathway">
    <text evidence="1">Cofactor biosynthesis; NAD(+) biosynthesis; NAD(+) from deamido-NAD(+) (ammonia route): step 1/1.</text>
</comment>
<comment type="subunit">
    <text evidence="1">Homodimer.</text>
</comment>
<comment type="similarity">
    <text evidence="1">Belongs to the NAD synthetase family.</text>
</comment>
<reference key="1">
    <citation type="submission" date="2002-12" db="EMBL/GenBank/DDBJ databases">
        <title>Complete genome sequence of Vibrio vulnificus CMCP6.</title>
        <authorList>
            <person name="Rhee J.H."/>
            <person name="Kim S.Y."/>
            <person name="Chung S.S."/>
            <person name="Kim J.J."/>
            <person name="Moon Y.H."/>
            <person name="Jeong H."/>
            <person name="Choy H.E."/>
        </authorList>
    </citation>
    <scope>NUCLEOTIDE SEQUENCE [LARGE SCALE GENOMIC DNA]</scope>
    <source>
        <strain>CMCP6</strain>
    </source>
</reference>
<organism>
    <name type="scientific">Vibrio vulnificus (strain CMCP6)</name>
    <dbReference type="NCBI Taxonomy" id="216895"/>
    <lineage>
        <taxon>Bacteria</taxon>
        <taxon>Pseudomonadati</taxon>
        <taxon>Pseudomonadota</taxon>
        <taxon>Gammaproteobacteria</taxon>
        <taxon>Vibrionales</taxon>
        <taxon>Vibrionaceae</taxon>
        <taxon>Vibrio</taxon>
    </lineage>
</organism>
<gene>
    <name evidence="1" type="primary">nadE</name>
    <name type="ordered locus">VV2_1599</name>
</gene>
<dbReference type="EC" id="6.3.1.5" evidence="1"/>
<dbReference type="EMBL" id="AE016796">
    <property type="protein sequence ID" value="AAO08459.1"/>
    <property type="molecule type" value="Genomic_DNA"/>
</dbReference>
<dbReference type="RefSeq" id="WP_011082443.1">
    <property type="nucleotide sequence ID" value="NC_004460.2"/>
</dbReference>
<dbReference type="SMR" id="Q8D3T7"/>
<dbReference type="KEGG" id="vvu:VV2_1599"/>
<dbReference type="HOGENOM" id="CLU_059327_3_0_6"/>
<dbReference type="UniPathway" id="UPA00253">
    <property type="reaction ID" value="UER00333"/>
</dbReference>
<dbReference type="Proteomes" id="UP000002275">
    <property type="component" value="Chromosome 2"/>
</dbReference>
<dbReference type="GO" id="GO:0005737">
    <property type="term" value="C:cytoplasm"/>
    <property type="evidence" value="ECO:0007669"/>
    <property type="project" value="InterPro"/>
</dbReference>
<dbReference type="GO" id="GO:0005524">
    <property type="term" value="F:ATP binding"/>
    <property type="evidence" value="ECO:0007669"/>
    <property type="project" value="UniProtKB-UniRule"/>
</dbReference>
<dbReference type="GO" id="GO:0004359">
    <property type="term" value="F:glutaminase activity"/>
    <property type="evidence" value="ECO:0007669"/>
    <property type="project" value="InterPro"/>
</dbReference>
<dbReference type="GO" id="GO:0046872">
    <property type="term" value="F:metal ion binding"/>
    <property type="evidence" value="ECO:0007669"/>
    <property type="project" value="UniProtKB-KW"/>
</dbReference>
<dbReference type="GO" id="GO:0003952">
    <property type="term" value="F:NAD+ synthase (glutamine-hydrolyzing) activity"/>
    <property type="evidence" value="ECO:0007669"/>
    <property type="project" value="InterPro"/>
</dbReference>
<dbReference type="GO" id="GO:0008795">
    <property type="term" value="F:NAD+ synthase activity"/>
    <property type="evidence" value="ECO:0007669"/>
    <property type="project" value="UniProtKB-UniRule"/>
</dbReference>
<dbReference type="GO" id="GO:0009435">
    <property type="term" value="P:NAD biosynthetic process"/>
    <property type="evidence" value="ECO:0007669"/>
    <property type="project" value="UniProtKB-UniRule"/>
</dbReference>
<dbReference type="CDD" id="cd00553">
    <property type="entry name" value="NAD_synthase"/>
    <property type="match status" value="1"/>
</dbReference>
<dbReference type="FunFam" id="3.40.50.620:FF:000015">
    <property type="entry name" value="NH(3)-dependent NAD(+) synthetase"/>
    <property type="match status" value="1"/>
</dbReference>
<dbReference type="Gene3D" id="3.40.50.620">
    <property type="entry name" value="HUPs"/>
    <property type="match status" value="1"/>
</dbReference>
<dbReference type="HAMAP" id="MF_00193">
    <property type="entry name" value="NadE_ammonia_dep"/>
    <property type="match status" value="1"/>
</dbReference>
<dbReference type="InterPro" id="IPR022310">
    <property type="entry name" value="NAD/GMP_synthase"/>
</dbReference>
<dbReference type="InterPro" id="IPR003694">
    <property type="entry name" value="NAD_synthase"/>
</dbReference>
<dbReference type="InterPro" id="IPR022926">
    <property type="entry name" value="NH(3)-dep_NAD(+)_synth"/>
</dbReference>
<dbReference type="InterPro" id="IPR014729">
    <property type="entry name" value="Rossmann-like_a/b/a_fold"/>
</dbReference>
<dbReference type="NCBIfam" id="TIGR00552">
    <property type="entry name" value="nadE"/>
    <property type="match status" value="1"/>
</dbReference>
<dbReference type="NCBIfam" id="NF001979">
    <property type="entry name" value="PRK00768.1"/>
    <property type="match status" value="1"/>
</dbReference>
<dbReference type="PANTHER" id="PTHR23090">
    <property type="entry name" value="NH 3 /GLUTAMINE-DEPENDENT NAD + SYNTHETASE"/>
    <property type="match status" value="1"/>
</dbReference>
<dbReference type="PANTHER" id="PTHR23090:SF7">
    <property type="entry name" value="NH(3)-DEPENDENT NAD(+) SYNTHETASE"/>
    <property type="match status" value="1"/>
</dbReference>
<dbReference type="Pfam" id="PF02540">
    <property type="entry name" value="NAD_synthase"/>
    <property type="match status" value="1"/>
</dbReference>
<dbReference type="SUPFAM" id="SSF52402">
    <property type="entry name" value="Adenine nucleotide alpha hydrolases-like"/>
    <property type="match status" value="1"/>
</dbReference>
<proteinExistence type="inferred from homology"/>
<name>NADE_VIBVU</name>
<feature type="chain" id="PRO_0000152217" description="NH(3)-dependent NAD(+) synthetase">
    <location>
        <begin position="1"/>
        <end position="276"/>
    </location>
</feature>
<feature type="binding site" evidence="1">
    <location>
        <begin position="43"/>
        <end position="50"/>
    </location>
    <ligand>
        <name>ATP</name>
        <dbReference type="ChEBI" id="CHEBI:30616"/>
    </ligand>
</feature>
<feature type="binding site" evidence="1">
    <location>
        <position position="49"/>
    </location>
    <ligand>
        <name>Mg(2+)</name>
        <dbReference type="ChEBI" id="CHEBI:18420"/>
    </ligand>
</feature>
<feature type="binding site" evidence="1">
    <location>
        <position position="146"/>
    </location>
    <ligand>
        <name>deamido-NAD(+)</name>
        <dbReference type="ChEBI" id="CHEBI:58437"/>
    </ligand>
</feature>
<feature type="binding site" evidence="1">
    <location>
        <position position="166"/>
    </location>
    <ligand>
        <name>ATP</name>
        <dbReference type="ChEBI" id="CHEBI:30616"/>
    </ligand>
</feature>
<feature type="binding site" evidence="1">
    <location>
        <position position="171"/>
    </location>
    <ligand>
        <name>Mg(2+)</name>
        <dbReference type="ChEBI" id="CHEBI:18420"/>
    </ligand>
</feature>
<feature type="binding site" evidence="1">
    <location>
        <position position="179"/>
    </location>
    <ligand>
        <name>deamido-NAD(+)</name>
        <dbReference type="ChEBI" id="CHEBI:58437"/>
    </ligand>
</feature>
<feature type="binding site" evidence="1">
    <location>
        <position position="186"/>
    </location>
    <ligand>
        <name>deamido-NAD(+)</name>
        <dbReference type="ChEBI" id="CHEBI:58437"/>
    </ligand>
</feature>
<feature type="binding site" evidence="1">
    <location>
        <position position="195"/>
    </location>
    <ligand>
        <name>ATP</name>
        <dbReference type="ChEBI" id="CHEBI:30616"/>
    </ligand>
</feature>
<feature type="binding site" evidence="1">
    <location>
        <position position="217"/>
    </location>
    <ligand>
        <name>ATP</name>
        <dbReference type="ChEBI" id="CHEBI:30616"/>
    </ligand>
</feature>
<feature type="binding site" evidence="1">
    <location>
        <begin position="266"/>
        <end position="267"/>
    </location>
    <ligand>
        <name>deamido-NAD(+)</name>
        <dbReference type="ChEBI" id="CHEBI:58437"/>
    </ligand>
</feature>
<sequence>MEQLIRDEMRVLPTIDPHFEIERRVAFIKKKLVESGCKSLVLGISGGVDSTTCGRLAQVAVDQLNQESNSNDYQFVAVRLPYGEQKDEEEAQLALSFIQPTHSVSVNIKAGVDGLHAASHIALEGTGLIPQDAAKVDFVKGNVKARARMVAQYEIAGYVGGLVLGTDHSAENITGFYTKFGDGACDLAPLFGLSKRQVRLVAETLGAPELLVKKVPTADLEELAPQKADEDALNLTYEQIDDFLEGKPVSEAVSARLVSIYKATQHKRQPIPTIYD</sequence>
<keyword id="KW-0067">ATP-binding</keyword>
<keyword id="KW-0436">Ligase</keyword>
<keyword id="KW-0460">Magnesium</keyword>
<keyword id="KW-0479">Metal-binding</keyword>
<keyword id="KW-0520">NAD</keyword>
<keyword id="KW-0547">Nucleotide-binding</keyword>